<accession>P97826</accession>
<accession>P97628</accession>
<comment type="function">
    <text evidence="2">Plays a key role in steroid hormone synthesis by enhancing the metabolism of cholesterol into pregnenolone. Mediates the transfer of cholesterol from the outer mitochondrial membrane to the inner mitochondrial membrane where it is cleaved to pregnenolone (By similarity).</text>
</comment>
<comment type="catalytic activity">
    <reaction evidence="2">
        <text>cholesterol(in) = cholesterol(out)</text>
        <dbReference type="Rhea" id="RHEA:39747"/>
        <dbReference type="ChEBI" id="CHEBI:16113"/>
    </reaction>
</comment>
<comment type="pathway">
    <text evidence="2">Steroid metabolism; cholesterol metabolism.</text>
</comment>
<comment type="subunit">
    <text evidence="4">May interact with TSPO.</text>
</comment>
<comment type="subcellular location">
    <subcellularLocation>
        <location evidence="3">Mitochondrion</location>
    </subcellularLocation>
</comment>
<gene>
    <name type="primary">Star</name>
</gene>
<feature type="transit peptide" description="Mitochondrion" evidence="1">
    <location>
        <begin position="1"/>
        <end position="62"/>
    </location>
</feature>
<feature type="chain" id="PRO_0000033320" description="Steroidogenic acute regulatory protein, mitochondrial">
    <location>
        <begin position="63"/>
        <end position="284"/>
    </location>
</feature>
<feature type="domain" description="START" evidence="5">
    <location>
        <begin position="66"/>
        <end position="279"/>
    </location>
</feature>
<feature type="modified residue" description="Phosphoserine; by PKA" evidence="2">
    <location>
        <position position="56"/>
    </location>
</feature>
<feature type="modified residue" description="Phosphoserine; by PKA" evidence="2">
    <location>
        <position position="194"/>
    </location>
</feature>
<feature type="sequence conflict" description="In Ref. 2; AAB41674." evidence="6" ref="2">
    <original>MLLATFK</original>
    <variation>MIWFSTAVLIGLYVFERFPTSMIGVGLFTNLVYFGLLQTFPFIMLTSPNFILSCGLVVVNHYLAFQFFAEEYYPFSEVLAYFTFC</variation>
    <location>
        <begin position="1"/>
        <end position="7"/>
    </location>
</feature>
<reference key="1">
    <citation type="journal article" date="1997" name="Life Sci.">
        <title>Molecular cloning, characterization and cellular distribution of rat steroidogenic acute regulatory protein (StAR) in the ovary.</title>
        <authorList>
            <person name="Mizutani T."/>
            <person name="Sonoda Y."/>
            <person name="Minegishi T."/>
            <person name="Wakabayashi K."/>
            <person name="Miyamoto K."/>
        </authorList>
    </citation>
    <scope>NUCLEOTIDE SEQUENCE [MRNA]</scope>
    <source>
        <strain>Wistar</strain>
        <tissue>Ovary</tissue>
    </source>
</reference>
<reference key="2">
    <citation type="journal article" date="1997" name="Biochem. Biophys. Res. Commun.">
        <title>Nucleotide sequence of rat steroidogenic acute regulatory protein complementary DNA.</title>
        <authorList>
            <person name="Lee H.K."/>
            <person name="Ahn R.S."/>
            <person name="Kwon H.B."/>
            <person name="Soh J."/>
        </authorList>
    </citation>
    <scope>NUCLEOTIDE SEQUENCE [MRNA]</scope>
    <source>
        <strain>Sprague-Dawley</strain>
        <tissue>Testis</tissue>
    </source>
</reference>
<reference key="3">
    <citation type="journal article" date="1998" name="J. Biol. Chem.">
        <title>Characterization of the rat Star gene that encodes the predominant 3.5-kilobase pair mRNA. ACTH stimulation of adrenal steroids in vivo precedes elevation of Star mRNA and protein.</title>
        <authorList>
            <person name="Ariyoshi N."/>
            <person name="Kim Y.-C."/>
            <person name="Artemenko I."/>
            <person name="Bhattacharyya K.K."/>
            <person name="Jefcoate C.R."/>
        </authorList>
    </citation>
    <scope>NUCLEOTIDE SEQUENCE [MRNA]</scope>
    <source>
        <strain>Sprague-Dawley</strain>
        <tissue>Adrenal gland</tissue>
    </source>
</reference>
<reference key="4">
    <citation type="journal article" date="1998" name="J. Neurochem.">
        <title>Steroidogenic acute regulatory protein (StAR) transcripts constitutively expressed in the adult rat central nervous system: colocalization of StAR, cytochrome P-450scc (CYPXIA1), and 3beta-hydroxysteroid dehydrogenase in the rat brain.</title>
        <authorList>
            <person name="Furukawa A."/>
            <person name="Miyatake A."/>
            <person name="Ohnishi T."/>
            <person name="Ichikawa Y."/>
        </authorList>
    </citation>
    <scope>NUCLEOTIDE SEQUENCE [MRNA]</scope>
    <source>
        <strain>Sprague-Dawley</strain>
        <tissue>Adrenal gland</tissue>
    </source>
</reference>
<reference key="5">
    <citation type="journal article" date="2004" name="Genome Res.">
        <title>The status, quality, and expansion of the NIH full-length cDNA project: the Mammalian Gene Collection (MGC).</title>
        <authorList>
            <consortium name="The MGC Project Team"/>
        </authorList>
    </citation>
    <scope>NUCLEOTIDE SEQUENCE [LARGE SCALE MRNA]</scope>
    <source>
        <tissue>Ovary</tissue>
    </source>
</reference>
<reference key="6">
    <citation type="journal article" date="1995" name="J. Steroid Biochem. Mol. Biol.">
        <title>Comparison of protein phosphorylation patterns produced in adrenal cells by activation of cAMP-dependent protein kinase and Ca-dependent protein kinase.</title>
        <authorList>
            <person name="Hartigan J.A."/>
            <person name="Green E.G."/>
            <person name="Mortensen R.M."/>
            <person name="Menachery A."/>
            <person name="Williams G.H."/>
            <person name="Orme-Johnson N.R."/>
        </authorList>
    </citation>
    <scope>PHOSPHORYLATION</scope>
</reference>
<name>STAR_RAT</name>
<protein>
    <recommendedName>
        <fullName>Steroidogenic acute regulatory protein, mitochondrial</fullName>
        <shortName>StAR</shortName>
    </recommendedName>
    <alternativeName>
        <fullName>START domain-containing protein 1</fullName>
        <shortName>StARD1</shortName>
    </alternativeName>
</protein>
<evidence type="ECO:0000250" key="1"/>
<evidence type="ECO:0000250" key="2">
    <source>
        <dbReference type="UniProtKB" id="P49675"/>
    </source>
</evidence>
<evidence type="ECO:0000250" key="3">
    <source>
        <dbReference type="UniProtKB" id="P51557"/>
    </source>
</evidence>
<evidence type="ECO:0000250" key="4">
    <source>
        <dbReference type="UniProtKB" id="P79245"/>
    </source>
</evidence>
<evidence type="ECO:0000255" key="5">
    <source>
        <dbReference type="PROSITE-ProRule" id="PRU00197"/>
    </source>
</evidence>
<evidence type="ECO:0000305" key="6"/>
<dbReference type="EMBL" id="AB001349">
    <property type="protein sequence ID" value="BAA19245.1"/>
    <property type="molecule type" value="mRNA"/>
</dbReference>
<dbReference type="EMBL" id="U76419">
    <property type="protein sequence ID" value="AAB41674.1"/>
    <property type="molecule type" value="mRNA"/>
</dbReference>
<dbReference type="EMBL" id="AF044081">
    <property type="protein sequence ID" value="AAC02528.1"/>
    <property type="molecule type" value="mRNA"/>
</dbReference>
<dbReference type="EMBL" id="AB006007">
    <property type="protein sequence ID" value="BAA34737.1"/>
    <property type="molecule type" value="mRNA"/>
</dbReference>
<dbReference type="EMBL" id="BC088859">
    <property type="protein sequence ID" value="AAH88859.1"/>
    <property type="molecule type" value="mRNA"/>
</dbReference>
<dbReference type="RefSeq" id="NP_113746.1">
    <property type="nucleotide sequence ID" value="NM_031558.3"/>
</dbReference>
<dbReference type="SMR" id="P97826"/>
<dbReference type="BioGRID" id="247588">
    <property type="interactions" value="1"/>
</dbReference>
<dbReference type="FunCoup" id="P97826">
    <property type="interactions" value="13"/>
</dbReference>
<dbReference type="STRING" id="10116.ENSRNOP00000020606"/>
<dbReference type="iPTMnet" id="P97826"/>
<dbReference type="PhosphoSitePlus" id="P97826"/>
<dbReference type="PaxDb" id="10116-ENSRNOP00000020606"/>
<dbReference type="Ensembl" id="ENSRNOT00000020606.5">
    <property type="protein sequence ID" value="ENSRNOP00000020606.2"/>
    <property type="gene ID" value="ENSRNOG00000015052.5"/>
</dbReference>
<dbReference type="GeneID" id="25557"/>
<dbReference type="KEGG" id="rno:25557"/>
<dbReference type="UCSC" id="RGD:3770">
    <property type="organism name" value="rat"/>
</dbReference>
<dbReference type="AGR" id="RGD:3770"/>
<dbReference type="CTD" id="6770"/>
<dbReference type="RGD" id="3770">
    <property type="gene designation" value="Star"/>
</dbReference>
<dbReference type="eggNOG" id="KOG3845">
    <property type="taxonomic scope" value="Eukaryota"/>
</dbReference>
<dbReference type="GeneTree" id="ENSGT00940000155477"/>
<dbReference type="HOGENOM" id="CLU_093200_1_0_1"/>
<dbReference type="InParanoid" id="P97826"/>
<dbReference type="OMA" id="PTPSAWI"/>
<dbReference type="OrthoDB" id="74575at2759"/>
<dbReference type="PhylomeDB" id="P97826"/>
<dbReference type="TreeFam" id="TF313869"/>
<dbReference type="Reactome" id="R-RNO-196108">
    <property type="pathway name" value="Pregnenolone biosynthesis"/>
</dbReference>
<dbReference type="Reactome" id="R-RNO-9837999">
    <property type="pathway name" value="Mitochondrial protein degradation"/>
</dbReference>
<dbReference type="UniPathway" id="UPA00296"/>
<dbReference type="PRO" id="PR:P97826"/>
<dbReference type="Proteomes" id="UP000002494">
    <property type="component" value="Chromosome 16"/>
</dbReference>
<dbReference type="Bgee" id="ENSRNOG00000015052">
    <property type="expression patterns" value="Expressed in ovary and 19 other cell types or tissues"/>
</dbReference>
<dbReference type="GO" id="GO:0030061">
    <property type="term" value="C:mitochondrial crista"/>
    <property type="evidence" value="ECO:0000314"/>
    <property type="project" value="RGD"/>
</dbReference>
<dbReference type="GO" id="GO:0005739">
    <property type="term" value="C:mitochondrion"/>
    <property type="evidence" value="ECO:0000266"/>
    <property type="project" value="RGD"/>
</dbReference>
<dbReference type="GO" id="GO:0043025">
    <property type="term" value="C:neuronal cell body"/>
    <property type="evidence" value="ECO:0000314"/>
    <property type="project" value="RGD"/>
</dbReference>
<dbReference type="GO" id="GO:0015485">
    <property type="term" value="F:cholesterol binding"/>
    <property type="evidence" value="ECO:0000266"/>
    <property type="project" value="RGD"/>
</dbReference>
<dbReference type="GO" id="GO:0120020">
    <property type="term" value="F:cholesterol transfer activity"/>
    <property type="evidence" value="ECO:0000304"/>
    <property type="project" value="RGD"/>
</dbReference>
<dbReference type="GO" id="GO:0006699">
    <property type="term" value="P:bile acid biosynthetic process"/>
    <property type="evidence" value="ECO:0000314"/>
    <property type="project" value="RGD"/>
</dbReference>
<dbReference type="GO" id="GO:0018879">
    <property type="term" value="P:biphenyl metabolic process"/>
    <property type="evidence" value="ECO:0000270"/>
    <property type="project" value="RGD"/>
</dbReference>
<dbReference type="GO" id="GO:0071312">
    <property type="term" value="P:cellular response to alkaloid"/>
    <property type="evidence" value="ECO:0000270"/>
    <property type="project" value="RGD"/>
</dbReference>
<dbReference type="GO" id="GO:0071236">
    <property type="term" value="P:cellular response to antibiotic"/>
    <property type="evidence" value="ECO:0000270"/>
    <property type="project" value="RGD"/>
</dbReference>
<dbReference type="GO" id="GO:0071276">
    <property type="term" value="P:cellular response to cadmium ion"/>
    <property type="evidence" value="ECO:0000270"/>
    <property type="project" value="RGD"/>
</dbReference>
<dbReference type="GO" id="GO:0071320">
    <property type="term" value="P:cellular response to cAMP"/>
    <property type="evidence" value="ECO:0000270"/>
    <property type="project" value="RGD"/>
</dbReference>
<dbReference type="GO" id="GO:0071549">
    <property type="term" value="P:cellular response to dexamethasone stimulus"/>
    <property type="evidence" value="ECO:0000270"/>
    <property type="project" value="RGD"/>
</dbReference>
<dbReference type="GO" id="GO:0071872">
    <property type="term" value="P:cellular response to epinephrine stimulus"/>
    <property type="evidence" value="ECO:0000270"/>
    <property type="project" value="RGD"/>
</dbReference>
<dbReference type="GO" id="GO:0044344">
    <property type="term" value="P:cellular response to fibroblast growth factor stimulus"/>
    <property type="evidence" value="ECO:0000270"/>
    <property type="project" value="RGD"/>
</dbReference>
<dbReference type="GO" id="GO:0071372">
    <property type="term" value="P:cellular response to follicle-stimulating hormone stimulus"/>
    <property type="evidence" value="ECO:0000270"/>
    <property type="project" value="RGD"/>
</dbReference>
<dbReference type="GO" id="GO:0071333">
    <property type="term" value="P:cellular response to glucose stimulus"/>
    <property type="evidence" value="ECO:0000270"/>
    <property type="project" value="RGD"/>
</dbReference>
<dbReference type="GO" id="GO:0071371">
    <property type="term" value="P:cellular response to gonadotropin stimulus"/>
    <property type="evidence" value="ECO:0000270"/>
    <property type="project" value="RGD"/>
</dbReference>
<dbReference type="GO" id="GO:0071378">
    <property type="term" value="P:cellular response to growth hormone stimulus"/>
    <property type="evidence" value="ECO:0000270"/>
    <property type="project" value="RGD"/>
</dbReference>
<dbReference type="GO" id="GO:0032869">
    <property type="term" value="P:cellular response to insulin stimulus"/>
    <property type="evidence" value="ECO:0000270"/>
    <property type="project" value="RGD"/>
</dbReference>
<dbReference type="GO" id="GO:0035457">
    <property type="term" value="P:cellular response to interferon-alpha"/>
    <property type="evidence" value="ECO:0000315"/>
    <property type="project" value="RGD"/>
</dbReference>
<dbReference type="GO" id="GO:0071222">
    <property type="term" value="P:cellular response to lipopolysaccharide"/>
    <property type="evidence" value="ECO:0000270"/>
    <property type="project" value="RGD"/>
</dbReference>
<dbReference type="GO" id="GO:0071373">
    <property type="term" value="P:cellular response to luteinizing hormone stimulus"/>
    <property type="evidence" value="ECO:0000270"/>
    <property type="project" value="RGD"/>
</dbReference>
<dbReference type="GO" id="GO:0071248">
    <property type="term" value="P:cellular response to metal ion"/>
    <property type="evidence" value="ECO:0000270"/>
    <property type="project" value="RGD"/>
</dbReference>
<dbReference type="GO" id="GO:0071560">
    <property type="term" value="P:cellular response to transforming growth factor beta stimulus"/>
    <property type="evidence" value="ECO:0000270"/>
    <property type="project" value="RGD"/>
</dbReference>
<dbReference type="GO" id="GO:0071346">
    <property type="term" value="P:cellular response to type II interferon"/>
    <property type="evidence" value="ECO:0000270"/>
    <property type="project" value="RGD"/>
</dbReference>
<dbReference type="GO" id="GO:0008203">
    <property type="term" value="P:cholesterol metabolic process"/>
    <property type="evidence" value="ECO:0007669"/>
    <property type="project" value="UniProtKB-UniPathway"/>
</dbReference>
<dbReference type="GO" id="GO:0007623">
    <property type="term" value="P:circadian rhythm"/>
    <property type="evidence" value="ECO:0000270"/>
    <property type="project" value="RGD"/>
</dbReference>
<dbReference type="GO" id="GO:0018894">
    <property type="term" value="P:dibenzo-p-dioxin metabolic process"/>
    <property type="evidence" value="ECO:0000270"/>
    <property type="project" value="RGD"/>
</dbReference>
<dbReference type="GO" id="GO:0006703">
    <property type="term" value="P:estrogen biosynthetic process"/>
    <property type="evidence" value="ECO:0000315"/>
    <property type="project" value="RGD"/>
</dbReference>
<dbReference type="GO" id="GO:0008211">
    <property type="term" value="P:glucocorticoid metabolic process"/>
    <property type="evidence" value="ECO:0000266"/>
    <property type="project" value="RGD"/>
</dbReference>
<dbReference type="GO" id="GO:0032367">
    <property type="term" value="P:intracellular cholesterol transport"/>
    <property type="evidence" value="ECO:0000270"/>
    <property type="project" value="RGD"/>
</dbReference>
<dbReference type="GO" id="GO:0006629">
    <property type="term" value="P:lipid metabolic process"/>
    <property type="evidence" value="ECO:0000266"/>
    <property type="project" value="RGD"/>
</dbReference>
<dbReference type="GO" id="GO:0008584">
    <property type="term" value="P:male gonad development"/>
    <property type="evidence" value="ECO:0000270"/>
    <property type="project" value="RGD"/>
</dbReference>
<dbReference type="GO" id="GO:0043524">
    <property type="term" value="P:negative regulation of neuron apoptotic process"/>
    <property type="evidence" value="ECO:0000315"/>
    <property type="project" value="RGD"/>
</dbReference>
<dbReference type="GO" id="GO:0006082">
    <property type="term" value="P:organic acid metabolic process"/>
    <property type="evidence" value="ECO:0000270"/>
    <property type="project" value="RGD"/>
</dbReference>
<dbReference type="GO" id="GO:0018958">
    <property type="term" value="P:phenol-containing compound metabolic process"/>
    <property type="evidence" value="ECO:0000270"/>
    <property type="project" value="RGD"/>
</dbReference>
<dbReference type="GO" id="GO:0018963">
    <property type="term" value="P:phthalate metabolic process"/>
    <property type="evidence" value="ECO:0000270"/>
    <property type="project" value="RGD"/>
</dbReference>
<dbReference type="GO" id="GO:0070859">
    <property type="term" value="P:positive regulation of bile acid biosynthetic process"/>
    <property type="evidence" value="ECO:0000266"/>
    <property type="project" value="RGD"/>
</dbReference>
<dbReference type="GO" id="GO:0010628">
    <property type="term" value="P:positive regulation of gene expression"/>
    <property type="evidence" value="ECO:0000315"/>
    <property type="project" value="RGD"/>
</dbReference>
<dbReference type="GO" id="GO:0050769">
    <property type="term" value="P:positive regulation of neurogenesis"/>
    <property type="evidence" value="ECO:0000315"/>
    <property type="project" value="RGD"/>
</dbReference>
<dbReference type="GO" id="GO:0048168">
    <property type="term" value="P:regulation of neuronal synaptic plasticity"/>
    <property type="evidence" value="ECO:0000315"/>
    <property type="project" value="RGD"/>
</dbReference>
<dbReference type="GO" id="GO:0050810">
    <property type="term" value="P:regulation of steroid biosynthetic process"/>
    <property type="evidence" value="ECO:0000266"/>
    <property type="project" value="RGD"/>
</dbReference>
<dbReference type="GO" id="GO:0014823">
    <property type="term" value="P:response to activity"/>
    <property type="evidence" value="ECO:0000270"/>
    <property type="project" value="RGD"/>
</dbReference>
<dbReference type="GO" id="GO:0080021">
    <property type="term" value="P:response to benzoic acid"/>
    <property type="evidence" value="ECO:0000270"/>
    <property type="project" value="RGD"/>
</dbReference>
<dbReference type="GO" id="GO:0051412">
    <property type="term" value="P:response to corticosterone"/>
    <property type="evidence" value="ECO:0000270"/>
    <property type="project" value="RGD"/>
</dbReference>
<dbReference type="GO" id="GO:0043627">
    <property type="term" value="P:response to estrogen"/>
    <property type="evidence" value="ECO:0000270"/>
    <property type="project" value="RGD"/>
</dbReference>
<dbReference type="GO" id="GO:0045471">
    <property type="term" value="P:response to ethanol"/>
    <property type="evidence" value="ECO:0000270"/>
    <property type="project" value="RGD"/>
</dbReference>
<dbReference type="GO" id="GO:0060992">
    <property type="term" value="P:response to fungicide"/>
    <property type="evidence" value="ECO:0000270"/>
    <property type="project" value="RGD"/>
</dbReference>
<dbReference type="GO" id="GO:0034698">
    <property type="term" value="P:response to gonadotropin"/>
    <property type="evidence" value="ECO:0000270"/>
    <property type="project" value="RGD"/>
</dbReference>
<dbReference type="GO" id="GO:0009635">
    <property type="term" value="P:response to herbicide"/>
    <property type="evidence" value="ECO:0000270"/>
    <property type="project" value="RGD"/>
</dbReference>
<dbReference type="GO" id="GO:0042542">
    <property type="term" value="P:response to hydrogen peroxide"/>
    <property type="evidence" value="ECO:0000270"/>
    <property type="project" value="RGD"/>
</dbReference>
<dbReference type="GO" id="GO:0017085">
    <property type="term" value="P:response to insecticide"/>
    <property type="evidence" value="ECO:0000270"/>
    <property type="project" value="RGD"/>
</dbReference>
<dbReference type="GO" id="GO:0010212">
    <property type="term" value="P:response to ionizing radiation"/>
    <property type="evidence" value="ECO:0000270"/>
    <property type="project" value="RGD"/>
</dbReference>
<dbReference type="GO" id="GO:0010288">
    <property type="term" value="P:response to lead ion"/>
    <property type="evidence" value="ECO:0000270"/>
    <property type="project" value="RGD"/>
</dbReference>
<dbReference type="GO" id="GO:0044321">
    <property type="term" value="P:response to leptin"/>
    <property type="evidence" value="ECO:0000270"/>
    <property type="project" value="RGD"/>
</dbReference>
<dbReference type="GO" id="GO:0035094">
    <property type="term" value="P:response to nicotine"/>
    <property type="evidence" value="ECO:0000270"/>
    <property type="project" value="RGD"/>
</dbReference>
<dbReference type="GO" id="GO:0007584">
    <property type="term" value="P:response to nutrient"/>
    <property type="evidence" value="ECO:0000270"/>
    <property type="project" value="RGD"/>
</dbReference>
<dbReference type="GO" id="GO:0031667">
    <property type="term" value="P:response to nutrient levels"/>
    <property type="evidence" value="ECO:0000270"/>
    <property type="project" value="RGD"/>
</dbReference>
<dbReference type="GO" id="GO:0043434">
    <property type="term" value="P:response to peptide hormone"/>
    <property type="evidence" value="ECO:0000270"/>
    <property type="project" value="RGD"/>
</dbReference>
<dbReference type="GO" id="GO:0032526">
    <property type="term" value="P:response to retinoic acid"/>
    <property type="evidence" value="ECO:0000270"/>
    <property type="project" value="RGD"/>
</dbReference>
<dbReference type="GO" id="GO:0048545">
    <property type="term" value="P:response to steroid hormone"/>
    <property type="evidence" value="ECO:0000270"/>
    <property type="project" value="RGD"/>
</dbReference>
<dbReference type="GO" id="GO:0009636">
    <property type="term" value="P:response to toxic substance"/>
    <property type="evidence" value="ECO:0000270"/>
    <property type="project" value="RGD"/>
</dbReference>
<dbReference type="GO" id="GO:0009410">
    <property type="term" value="P:response to xenobiotic stimulus"/>
    <property type="evidence" value="ECO:0000270"/>
    <property type="project" value="RGD"/>
</dbReference>
<dbReference type="GO" id="GO:0006694">
    <property type="term" value="P:steroid biosynthetic process"/>
    <property type="evidence" value="ECO:0000318"/>
    <property type="project" value="GO_Central"/>
</dbReference>
<dbReference type="GO" id="GO:0061370">
    <property type="term" value="P:testosterone biosynthetic process"/>
    <property type="evidence" value="ECO:0000270"/>
    <property type="project" value="RGD"/>
</dbReference>
<dbReference type="CDD" id="cd08905">
    <property type="entry name" value="START_STARD1-like"/>
    <property type="match status" value="1"/>
</dbReference>
<dbReference type="FunFam" id="3.30.530.20:FF:000015">
    <property type="entry name" value="Steroidogenic acute regulatory protein, mitochondrial"/>
    <property type="match status" value="1"/>
</dbReference>
<dbReference type="Gene3D" id="3.30.530.20">
    <property type="match status" value="1"/>
</dbReference>
<dbReference type="InterPro" id="IPR029866">
    <property type="entry name" value="StAR"/>
</dbReference>
<dbReference type="InterPro" id="IPR000799">
    <property type="entry name" value="StAR-like"/>
</dbReference>
<dbReference type="InterPro" id="IPR023393">
    <property type="entry name" value="START-like_dom_sf"/>
</dbReference>
<dbReference type="InterPro" id="IPR002913">
    <property type="entry name" value="START_lipid-bd_dom"/>
</dbReference>
<dbReference type="PANTHER" id="PTHR46489">
    <property type="entry name" value="STEROIDOGENIC ACUTE REGULATORY PROTEIN, MITOCHONDRIAL"/>
    <property type="match status" value="1"/>
</dbReference>
<dbReference type="PANTHER" id="PTHR46489:SF1">
    <property type="entry name" value="STEROIDOGENIC ACUTE REGULATORY PROTEIN, MITOCHONDRIAL"/>
    <property type="match status" value="1"/>
</dbReference>
<dbReference type="Pfam" id="PF01852">
    <property type="entry name" value="START"/>
    <property type="match status" value="1"/>
</dbReference>
<dbReference type="PRINTS" id="PR00978">
    <property type="entry name" value="STARPROTEIN"/>
</dbReference>
<dbReference type="SMART" id="SM00234">
    <property type="entry name" value="START"/>
    <property type="match status" value="1"/>
</dbReference>
<dbReference type="SUPFAM" id="SSF55961">
    <property type="entry name" value="Bet v1-like"/>
    <property type="match status" value="1"/>
</dbReference>
<dbReference type="PROSITE" id="PS50848">
    <property type="entry name" value="START"/>
    <property type="match status" value="1"/>
</dbReference>
<sequence>MLLATFKLCAGSSYRHMRNMKGLRHQAVLAIGQELNRRALGDPSPGWMGQVRRRSSLLGSQLEATLYSDQELSYIQQGEEAMQKALGILNNQEGWKKESQQENGDEVLSKVVPGVGKVFRLEVLLDQPMDRLYEELVDRMEAMGEWNPNVKEIKVLKKIGKDTVITHELAAAAAGNLVGPRDFVSVRCTKRRGSTCVLAGMATHFGEMPEQSGVIRAEHGPTCMVLHPLAGSPSKTKLTWLLSIDLKGWLPKTIINQVLSQTQIEFASHLRKRLESSPASEAQC</sequence>
<organism>
    <name type="scientific">Rattus norvegicus</name>
    <name type="common">Rat</name>
    <dbReference type="NCBI Taxonomy" id="10116"/>
    <lineage>
        <taxon>Eukaryota</taxon>
        <taxon>Metazoa</taxon>
        <taxon>Chordata</taxon>
        <taxon>Craniata</taxon>
        <taxon>Vertebrata</taxon>
        <taxon>Euteleostomi</taxon>
        <taxon>Mammalia</taxon>
        <taxon>Eutheria</taxon>
        <taxon>Euarchontoglires</taxon>
        <taxon>Glires</taxon>
        <taxon>Rodentia</taxon>
        <taxon>Myomorpha</taxon>
        <taxon>Muroidea</taxon>
        <taxon>Muridae</taxon>
        <taxon>Murinae</taxon>
        <taxon>Rattus</taxon>
    </lineage>
</organism>
<proteinExistence type="evidence at protein level"/>
<keyword id="KW-0445">Lipid transport</keyword>
<keyword id="KW-0446">Lipid-binding</keyword>
<keyword id="KW-0496">Mitochondrion</keyword>
<keyword id="KW-0597">Phosphoprotein</keyword>
<keyword id="KW-1185">Reference proteome</keyword>
<keyword id="KW-0755">Steroidogenesis</keyword>
<keyword id="KW-0809">Transit peptide</keyword>
<keyword id="KW-0813">Transport</keyword>